<reference key="1">
    <citation type="journal article" date="2007" name="PLoS Genet.">
        <title>Patterns and implications of gene gain and loss in the evolution of Prochlorococcus.</title>
        <authorList>
            <person name="Kettler G.C."/>
            <person name="Martiny A.C."/>
            <person name="Huang K."/>
            <person name="Zucker J."/>
            <person name="Coleman M.L."/>
            <person name="Rodrigue S."/>
            <person name="Chen F."/>
            <person name="Lapidus A."/>
            <person name="Ferriera S."/>
            <person name="Johnson J."/>
            <person name="Steglich C."/>
            <person name="Church G.M."/>
            <person name="Richardson P."/>
            <person name="Chisholm S.W."/>
        </authorList>
    </citation>
    <scope>NUCLEOTIDE SEQUENCE [LARGE SCALE GENOMIC DNA]</scope>
    <source>
        <strain>MIT 9215</strain>
    </source>
</reference>
<keyword id="KW-0997">Cell inner membrane</keyword>
<keyword id="KW-1003">Cell membrane</keyword>
<keyword id="KW-0350">Heme biosynthesis</keyword>
<keyword id="KW-0472">Membrane</keyword>
<keyword id="KW-0808">Transferase</keyword>
<keyword id="KW-0812">Transmembrane</keyword>
<keyword id="KW-1133">Transmembrane helix</keyword>
<sequence>MNSSNLEKLNCKSSIRDEVVPSRKRVTLPPWLEVAKPRLIPLLLATTLGGMALTEEWPLSSPKLICTLGGGALAAAAAGALNCLWEMELDKRMTRTSKRALPAGKLSSETVFLAAVSCTLAASMLLVSGVNYLAAGLTLLGLFSYVILYTVILKPRTTKNIVFGGVAGAIPPLVGASAATGHVGLSGWWLFGLVMLWTPAHFWALAILLKDDYASVGIPMLPSVKGSVFTAKAISRYGWATVLMSIMGVFALPEGGLLYGIMLLPFNGRLLQLINELKKSPDDLSRAKSLFRWSILYMFGICLLLLISRTQLSVEFEQQSMQIFFSILSLLSN</sequence>
<comment type="function">
    <text evidence="1">Converts heme B (protoheme IX) to heme O by substitution of the vinyl group on carbon 2 of heme B porphyrin ring with a hydroxyethyl farnesyl side group.</text>
</comment>
<comment type="catalytic activity">
    <reaction evidence="1">
        <text>heme b + (2E,6E)-farnesyl diphosphate + H2O = Fe(II)-heme o + diphosphate</text>
        <dbReference type="Rhea" id="RHEA:28070"/>
        <dbReference type="ChEBI" id="CHEBI:15377"/>
        <dbReference type="ChEBI" id="CHEBI:33019"/>
        <dbReference type="ChEBI" id="CHEBI:60344"/>
        <dbReference type="ChEBI" id="CHEBI:60530"/>
        <dbReference type="ChEBI" id="CHEBI:175763"/>
        <dbReference type="EC" id="2.5.1.141"/>
    </reaction>
</comment>
<comment type="pathway">
    <text evidence="1">Porphyrin-containing compound metabolism; heme O biosynthesis; heme O from protoheme: step 1/1.</text>
</comment>
<comment type="subcellular location">
    <subcellularLocation>
        <location evidence="1">Cell inner membrane</location>
        <topology evidence="1">Multi-pass membrane protein</topology>
    </subcellularLocation>
</comment>
<comment type="miscellaneous">
    <text evidence="1">Carbon 2 of the heme B porphyrin ring is defined according to the Fischer nomenclature.</text>
</comment>
<comment type="similarity">
    <text evidence="1">Belongs to the UbiA prenyltransferase family. Protoheme IX farnesyltransferase subfamily.</text>
</comment>
<organism>
    <name type="scientific">Prochlorococcus marinus (strain MIT 9215)</name>
    <dbReference type="NCBI Taxonomy" id="93060"/>
    <lineage>
        <taxon>Bacteria</taxon>
        <taxon>Bacillati</taxon>
        <taxon>Cyanobacteriota</taxon>
        <taxon>Cyanophyceae</taxon>
        <taxon>Synechococcales</taxon>
        <taxon>Prochlorococcaceae</taxon>
        <taxon>Prochlorococcus</taxon>
    </lineage>
</organism>
<evidence type="ECO:0000255" key="1">
    <source>
        <dbReference type="HAMAP-Rule" id="MF_00154"/>
    </source>
</evidence>
<gene>
    <name evidence="1" type="primary">ctaB</name>
    <name type="ordered locus">P9215_05271</name>
</gene>
<protein>
    <recommendedName>
        <fullName evidence="1">Protoheme IX farnesyltransferase</fullName>
        <ecNumber evidence="1">2.5.1.141</ecNumber>
    </recommendedName>
    <alternativeName>
        <fullName evidence="1">Heme B farnesyltransferase</fullName>
    </alternativeName>
    <alternativeName>
        <fullName evidence="1">Heme O synthase</fullName>
    </alternativeName>
</protein>
<proteinExistence type="inferred from homology"/>
<accession>A8G3G2</accession>
<dbReference type="EC" id="2.5.1.141" evidence="1"/>
<dbReference type="EMBL" id="CP000825">
    <property type="protein sequence ID" value="ABV50143.1"/>
    <property type="molecule type" value="Genomic_DNA"/>
</dbReference>
<dbReference type="RefSeq" id="WP_012007275.1">
    <property type="nucleotide sequence ID" value="NC_009840.1"/>
</dbReference>
<dbReference type="SMR" id="A8G3G2"/>
<dbReference type="STRING" id="93060.P9215_05271"/>
<dbReference type="KEGG" id="pmh:P9215_05271"/>
<dbReference type="eggNOG" id="COG0109">
    <property type="taxonomic scope" value="Bacteria"/>
</dbReference>
<dbReference type="HOGENOM" id="CLU_029631_0_2_3"/>
<dbReference type="OrthoDB" id="9814417at2"/>
<dbReference type="UniPathway" id="UPA00834">
    <property type="reaction ID" value="UER00712"/>
</dbReference>
<dbReference type="Proteomes" id="UP000002014">
    <property type="component" value="Chromosome"/>
</dbReference>
<dbReference type="GO" id="GO:0005886">
    <property type="term" value="C:plasma membrane"/>
    <property type="evidence" value="ECO:0007669"/>
    <property type="project" value="UniProtKB-SubCell"/>
</dbReference>
<dbReference type="GO" id="GO:0008495">
    <property type="term" value="F:protoheme IX farnesyltransferase activity"/>
    <property type="evidence" value="ECO:0007669"/>
    <property type="project" value="UniProtKB-UniRule"/>
</dbReference>
<dbReference type="GO" id="GO:0048034">
    <property type="term" value="P:heme O biosynthetic process"/>
    <property type="evidence" value="ECO:0007669"/>
    <property type="project" value="UniProtKB-UniRule"/>
</dbReference>
<dbReference type="CDD" id="cd13957">
    <property type="entry name" value="PT_UbiA_Cox10"/>
    <property type="match status" value="1"/>
</dbReference>
<dbReference type="Gene3D" id="1.10.357.140">
    <property type="entry name" value="UbiA prenyltransferase"/>
    <property type="match status" value="1"/>
</dbReference>
<dbReference type="HAMAP" id="MF_00154">
    <property type="entry name" value="CyoE_CtaB"/>
    <property type="match status" value="1"/>
</dbReference>
<dbReference type="InterPro" id="IPR006369">
    <property type="entry name" value="Protohaem_IX_farnesylTrfase"/>
</dbReference>
<dbReference type="InterPro" id="IPR000537">
    <property type="entry name" value="UbiA_prenyltransferase"/>
</dbReference>
<dbReference type="InterPro" id="IPR030470">
    <property type="entry name" value="UbiA_prenylTrfase_CS"/>
</dbReference>
<dbReference type="InterPro" id="IPR044878">
    <property type="entry name" value="UbiA_sf"/>
</dbReference>
<dbReference type="NCBIfam" id="TIGR01473">
    <property type="entry name" value="cyoE_ctaB"/>
    <property type="match status" value="1"/>
</dbReference>
<dbReference type="NCBIfam" id="NF003349">
    <property type="entry name" value="PRK04375.1-2"/>
    <property type="match status" value="1"/>
</dbReference>
<dbReference type="PANTHER" id="PTHR43448:SF7">
    <property type="entry name" value="4-HYDROXYBENZOATE SOLANESYLTRANSFERASE"/>
    <property type="match status" value="1"/>
</dbReference>
<dbReference type="PANTHER" id="PTHR43448">
    <property type="entry name" value="PROTOHEME IX FARNESYLTRANSFERASE, MITOCHONDRIAL"/>
    <property type="match status" value="1"/>
</dbReference>
<dbReference type="Pfam" id="PF01040">
    <property type="entry name" value="UbiA"/>
    <property type="match status" value="1"/>
</dbReference>
<dbReference type="PROSITE" id="PS00943">
    <property type="entry name" value="UBIA"/>
    <property type="match status" value="1"/>
</dbReference>
<feature type="chain" id="PRO_0000327114" description="Protoheme IX farnesyltransferase">
    <location>
        <begin position="1"/>
        <end position="333"/>
    </location>
</feature>
<feature type="transmembrane region" description="Helical" evidence="1">
    <location>
        <begin position="64"/>
        <end position="84"/>
    </location>
</feature>
<feature type="transmembrane region" description="Helical" evidence="1">
    <location>
        <begin position="110"/>
        <end position="130"/>
    </location>
</feature>
<feature type="transmembrane region" description="Helical" evidence="1">
    <location>
        <begin position="133"/>
        <end position="153"/>
    </location>
</feature>
<feature type="transmembrane region" description="Helical" evidence="1">
    <location>
        <begin position="161"/>
        <end position="181"/>
    </location>
</feature>
<feature type="transmembrane region" description="Helical" evidence="1">
    <location>
        <begin position="189"/>
        <end position="209"/>
    </location>
</feature>
<feature type="transmembrane region" description="Helical" evidence="1">
    <location>
        <begin position="246"/>
        <end position="266"/>
    </location>
</feature>
<feature type="transmembrane region" description="Helical" evidence="1">
    <location>
        <begin position="287"/>
        <end position="307"/>
    </location>
</feature>
<name>COXX_PROM2</name>